<proteinExistence type="evidence at protein level"/>
<protein>
    <recommendedName>
        <fullName evidence="3">Alpha-elapitoxin-Ppr1</fullName>
    </recommendedName>
    <alternativeName>
        <fullName>Short neurotoxin 1</fullName>
        <shortName>SNTX-1</shortName>
    </alternativeName>
</protein>
<accession>A8HDJ4</accession>
<name>3S11_PSEPO</name>
<keyword id="KW-0008">Acetylcholine receptor inhibiting toxin</keyword>
<keyword id="KW-0903">Direct protein sequencing</keyword>
<keyword id="KW-1015">Disulfide bond</keyword>
<keyword id="KW-0872">Ion channel impairing toxin</keyword>
<keyword id="KW-0528">Neurotoxin</keyword>
<keyword id="KW-0629">Postsynaptic neurotoxin</keyword>
<keyword id="KW-0964">Secreted</keyword>
<keyword id="KW-0732">Signal</keyword>
<keyword id="KW-0800">Toxin</keyword>
<sequence length="83" mass="9037">MKTLLLTLVVVTIVCLDLGYTMTCCNQQSSQPKTTTTCAGGESSCYKKTWSDHRGSRTERGCGCPHVKPGIKLTCCETDECNN</sequence>
<dbReference type="EMBL" id="DQ917499">
    <property type="protein sequence ID" value="ABK63528.1"/>
    <property type="molecule type" value="mRNA"/>
</dbReference>
<dbReference type="SMR" id="A8HDJ4"/>
<dbReference type="GO" id="GO:0005576">
    <property type="term" value="C:extracellular region"/>
    <property type="evidence" value="ECO:0007669"/>
    <property type="project" value="UniProtKB-SubCell"/>
</dbReference>
<dbReference type="GO" id="GO:0030550">
    <property type="term" value="F:acetylcholine receptor inhibitor activity"/>
    <property type="evidence" value="ECO:0007669"/>
    <property type="project" value="UniProtKB-KW"/>
</dbReference>
<dbReference type="GO" id="GO:0099106">
    <property type="term" value="F:ion channel regulator activity"/>
    <property type="evidence" value="ECO:0007669"/>
    <property type="project" value="UniProtKB-KW"/>
</dbReference>
<dbReference type="GO" id="GO:0090729">
    <property type="term" value="F:toxin activity"/>
    <property type="evidence" value="ECO:0007669"/>
    <property type="project" value="UniProtKB-KW"/>
</dbReference>
<dbReference type="CDD" id="cd00206">
    <property type="entry name" value="TFP_snake_toxin"/>
    <property type="match status" value="1"/>
</dbReference>
<dbReference type="FunFam" id="2.10.60.10:FF:000024">
    <property type="entry name" value="Cytotoxin 1"/>
    <property type="match status" value="1"/>
</dbReference>
<dbReference type="Gene3D" id="2.10.60.10">
    <property type="entry name" value="CD59"/>
    <property type="match status" value="1"/>
</dbReference>
<dbReference type="InterPro" id="IPR003571">
    <property type="entry name" value="Snake_3FTx"/>
</dbReference>
<dbReference type="InterPro" id="IPR045860">
    <property type="entry name" value="Snake_toxin-like_sf"/>
</dbReference>
<dbReference type="InterPro" id="IPR018354">
    <property type="entry name" value="Snake_toxin_con_site"/>
</dbReference>
<dbReference type="InterPro" id="IPR054131">
    <property type="entry name" value="Toxin_cobra-type"/>
</dbReference>
<dbReference type="Pfam" id="PF21947">
    <property type="entry name" value="Toxin_cobra-type"/>
    <property type="match status" value="1"/>
</dbReference>
<dbReference type="SUPFAM" id="SSF57302">
    <property type="entry name" value="Snake toxin-like"/>
    <property type="match status" value="1"/>
</dbReference>
<dbReference type="PROSITE" id="PS00272">
    <property type="entry name" value="SNAKE_TOXIN"/>
    <property type="match status" value="1"/>
</dbReference>
<organism>
    <name type="scientific">Pseudechis porphyriacus</name>
    <name type="common">Red-bellied black snake</name>
    <dbReference type="NCBI Taxonomy" id="8671"/>
    <lineage>
        <taxon>Eukaryota</taxon>
        <taxon>Metazoa</taxon>
        <taxon>Chordata</taxon>
        <taxon>Craniata</taxon>
        <taxon>Vertebrata</taxon>
        <taxon>Euteleostomi</taxon>
        <taxon>Lepidosauria</taxon>
        <taxon>Squamata</taxon>
        <taxon>Bifurcata</taxon>
        <taxon>Unidentata</taxon>
        <taxon>Episquamata</taxon>
        <taxon>Toxicofera</taxon>
        <taxon>Serpentes</taxon>
        <taxon>Colubroidea</taxon>
        <taxon>Elapidae</taxon>
        <taxon>Hydrophiinae</taxon>
        <taxon>Pseudechis</taxon>
    </lineage>
</organism>
<reference key="1">
    <citation type="journal article" date="2007" name="Cell. Mol. Life Sci.">
        <title>Distinct activities of novel neurotoxins from Australian venomous snakes for nicotinic acetylcholine receptors.</title>
        <authorList>
            <person name="St Pierre L."/>
            <person name="Fischer H."/>
            <person name="Adams D.J."/>
            <person name="Schenning M."/>
            <person name="Lavidis N."/>
            <person name="de Jersey J."/>
            <person name="Masci P.P."/>
            <person name="Lavin M.F."/>
        </authorList>
    </citation>
    <scope>NUCLEOTIDE SEQUENCE [MRNA]</scope>
    <source>
        <tissue>Venom gland</tissue>
    </source>
</reference>
<reference key="2">
    <citation type="journal article" date="2013" name="Toxicol. Lett.">
        <title>Species differences in the neuromuscular activity of post-synaptic neurotoxins from two Australian black snakes (Pseudechis porphyriacus and Pseudechis colletti).</title>
        <authorList>
            <person name="Hart A.J."/>
            <person name="Isbister G.K."/>
            <person name="O'Donnell P."/>
            <person name="Williamson N.A."/>
            <person name="Hodgson W.C."/>
        </authorList>
    </citation>
    <scope>PROTEIN SEQUENCE OF 22-83</scope>
    <scope>FUNCTION</scope>
    <scope>SUBCELLULAR LOCATION</scope>
    <source>
        <tissue>Venom</tissue>
    </source>
</reference>
<comment type="function">
    <text evidence="2">Bird-specific neurotoxin (tested on chicken) that acts as a pseudo-irreversible antagonist at the nicotinic acetylcholine receptor (nAChR) of the skeletal neuromuscular junction. Has no significant effect on the electrically-induced twitches of the rat isolated phrenic nerve-diaphragm preparation.</text>
</comment>
<comment type="subcellular location">
    <subcellularLocation>
        <location evidence="2">Secreted</location>
    </subcellularLocation>
</comment>
<comment type="tissue specificity">
    <text evidence="5 6">Expressed by the venom gland.</text>
</comment>
<comment type="similarity">
    <text evidence="4">Belongs to the three-finger toxin family. Short-chain subfamily. Type I alpha-neurotoxin sub-subfamily.</text>
</comment>
<evidence type="ECO:0000250" key="1">
    <source>
        <dbReference type="UniProtKB" id="P0C1Z0"/>
    </source>
</evidence>
<evidence type="ECO:0000269" key="2">
    <source>
    </source>
</evidence>
<evidence type="ECO:0000303" key="3">
    <source>
    </source>
</evidence>
<evidence type="ECO:0000305" key="4"/>
<evidence type="ECO:0000305" key="5">
    <source>
    </source>
</evidence>
<evidence type="ECO:0000305" key="6">
    <source>
    </source>
</evidence>
<feature type="signal peptide" evidence="6">
    <location>
        <begin position="1"/>
        <end position="21"/>
    </location>
</feature>
<feature type="chain" id="PRO_5000279907" description="Alpha-elapitoxin-Ppr1" evidence="2">
    <location>
        <begin position="22"/>
        <end position="83"/>
    </location>
</feature>
<feature type="disulfide bond" evidence="1">
    <location>
        <begin position="24"/>
        <end position="45"/>
    </location>
</feature>
<feature type="disulfide bond" evidence="1">
    <location>
        <begin position="38"/>
        <end position="62"/>
    </location>
</feature>
<feature type="disulfide bond" evidence="1">
    <location>
        <begin position="64"/>
        <end position="75"/>
    </location>
</feature>
<feature type="disulfide bond" evidence="1">
    <location>
        <begin position="76"/>
        <end position="81"/>
    </location>
</feature>